<keyword id="KW-0067">ATP-binding</keyword>
<keyword id="KW-0315">Glutamine amidotransferase</keyword>
<keyword id="KW-0332">GMP biosynthesis</keyword>
<keyword id="KW-0436">Ligase</keyword>
<keyword id="KW-0547">Nucleotide-binding</keyword>
<keyword id="KW-0658">Purine biosynthesis</keyword>
<comment type="function">
    <text evidence="1">Catalyzes the synthesis of GMP from XMP.</text>
</comment>
<comment type="catalytic activity">
    <reaction evidence="1">
        <text>XMP + L-glutamine + ATP + H2O = GMP + L-glutamate + AMP + diphosphate + 2 H(+)</text>
        <dbReference type="Rhea" id="RHEA:11680"/>
        <dbReference type="ChEBI" id="CHEBI:15377"/>
        <dbReference type="ChEBI" id="CHEBI:15378"/>
        <dbReference type="ChEBI" id="CHEBI:29985"/>
        <dbReference type="ChEBI" id="CHEBI:30616"/>
        <dbReference type="ChEBI" id="CHEBI:33019"/>
        <dbReference type="ChEBI" id="CHEBI:57464"/>
        <dbReference type="ChEBI" id="CHEBI:58115"/>
        <dbReference type="ChEBI" id="CHEBI:58359"/>
        <dbReference type="ChEBI" id="CHEBI:456215"/>
        <dbReference type="EC" id="6.3.5.2"/>
    </reaction>
</comment>
<comment type="pathway">
    <text evidence="1">Purine metabolism; GMP biosynthesis; GMP from XMP (L-Gln route): step 1/1.</text>
</comment>
<comment type="subunit">
    <text evidence="1">Homodimer.</text>
</comment>
<name>GUAA_BURM9</name>
<feature type="chain" id="PRO_1000120237" description="GMP synthase [glutamine-hydrolyzing]">
    <location>
        <begin position="1"/>
        <end position="539"/>
    </location>
</feature>
<feature type="domain" description="Glutamine amidotransferase type-1" evidence="1">
    <location>
        <begin position="4"/>
        <end position="202"/>
    </location>
</feature>
<feature type="domain" description="GMPS ATP-PPase" evidence="1">
    <location>
        <begin position="203"/>
        <end position="395"/>
    </location>
</feature>
<feature type="active site" description="Nucleophile" evidence="1">
    <location>
        <position position="81"/>
    </location>
</feature>
<feature type="active site" evidence="1">
    <location>
        <position position="176"/>
    </location>
</feature>
<feature type="active site" evidence="1">
    <location>
        <position position="178"/>
    </location>
</feature>
<feature type="binding site" evidence="1">
    <location>
        <begin position="230"/>
        <end position="236"/>
    </location>
    <ligand>
        <name>ATP</name>
        <dbReference type="ChEBI" id="CHEBI:30616"/>
    </ligand>
</feature>
<reference key="1">
    <citation type="journal article" date="2010" name="Genome Biol. Evol.">
        <title>Continuing evolution of Burkholderia mallei through genome reduction and large-scale rearrangements.</title>
        <authorList>
            <person name="Losada L."/>
            <person name="Ronning C.M."/>
            <person name="DeShazer D."/>
            <person name="Woods D."/>
            <person name="Fedorova N."/>
            <person name="Kim H.S."/>
            <person name="Shabalina S.A."/>
            <person name="Pearson T.R."/>
            <person name="Brinkac L."/>
            <person name="Tan P."/>
            <person name="Nandi T."/>
            <person name="Crabtree J."/>
            <person name="Badger J."/>
            <person name="Beckstrom-Sternberg S."/>
            <person name="Saqib M."/>
            <person name="Schutzer S.E."/>
            <person name="Keim P."/>
            <person name="Nierman W.C."/>
        </authorList>
    </citation>
    <scope>NUCLEOTIDE SEQUENCE [LARGE SCALE GENOMIC DNA]</scope>
    <source>
        <strain>NCTC 10229</strain>
    </source>
</reference>
<organism>
    <name type="scientific">Burkholderia mallei (strain NCTC 10229)</name>
    <dbReference type="NCBI Taxonomy" id="412022"/>
    <lineage>
        <taxon>Bacteria</taxon>
        <taxon>Pseudomonadati</taxon>
        <taxon>Pseudomonadota</taxon>
        <taxon>Betaproteobacteria</taxon>
        <taxon>Burkholderiales</taxon>
        <taxon>Burkholderiaceae</taxon>
        <taxon>Burkholderia</taxon>
        <taxon>pseudomallei group</taxon>
    </lineage>
</organism>
<proteinExistence type="inferred from homology"/>
<evidence type="ECO:0000255" key="1">
    <source>
        <dbReference type="HAMAP-Rule" id="MF_00344"/>
    </source>
</evidence>
<gene>
    <name evidence="1" type="primary">guaA</name>
    <name type="ordered locus">BMA10229_A3290</name>
</gene>
<accession>A2SBA7</accession>
<dbReference type="EC" id="6.3.5.2" evidence="1"/>
<dbReference type="EMBL" id="CP000546">
    <property type="protein sequence ID" value="ABN02976.1"/>
    <property type="molecule type" value="Genomic_DNA"/>
</dbReference>
<dbReference type="RefSeq" id="WP_004193192.1">
    <property type="nucleotide sequence ID" value="NC_008836.1"/>
</dbReference>
<dbReference type="SMR" id="A2SBA7"/>
<dbReference type="GeneID" id="93060667"/>
<dbReference type="KEGG" id="bml:BMA10229_A3290"/>
<dbReference type="HOGENOM" id="CLU_014340_0_5_4"/>
<dbReference type="UniPathway" id="UPA00189">
    <property type="reaction ID" value="UER00296"/>
</dbReference>
<dbReference type="Proteomes" id="UP000002283">
    <property type="component" value="Chromosome I"/>
</dbReference>
<dbReference type="GO" id="GO:0005829">
    <property type="term" value="C:cytosol"/>
    <property type="evidence" value="ECO:0007669"/>
    <property type="project" value="TreeGrafter"/>
</dbReference>
<dbReference type="GO" id="GO:0005524">
    <property type="term" value="F:ATP binding"/>
    <property type="evidence" value="ECO:0007669"/>
    <property type="project" value="UniProtKB-UniRule"/>
</dbReference>
<dbReference type="GO" id="GO:0003921">
    <property type="term" value="F:GMP synthase activity"/>
    <property type="evidence" value="ECO:0007669"/>
    <property type="project" value="InterPro"/>
</dbReference>
<dbReference type="CDD" id="cd01742">
    <property type="entry name" value="GATase1_GMP_Synthase"/>
    <property type="match status" value="1"/>
</dbReference>
<dbReference type="CDD" id="cd01997">
    <property type="entry name" value="GMP_synthase_C"/>
    <property type="match status" value="1"/>
</dbReference>
<dbReference type="FunFam" id="3.30.300.10:FF:000002">
    <property type="entry name" value="GMP synthase [glutamine-hydrolyzing]"/>
    <property type="match status" value="1"/>
</dbReference>
<dbReference type="FunFam" id="3.40.50.620:FF:000001">
    <property type="entry name" value="GMP synthase [glutamine-hydrolyzing]"/>
    <property type="match status" value="1"/>
</dbReference>
<dbReference type="FunFam" id="3.40.50.880:FF:000001">
    <property type="entry name" value="GMP synthase [glutamine-hydrolyzing]"/>
    <property type="match status" value="1"/>
</dbReference>
<dbReference type="Gene3D" id="3.30.300.10">
    <property type="match status" value="1"/>
</dbReference>
<dbReference type="Gene3D" id="3.40.50.880">
    <property type="match status" value="1"/>
</dbReference>
<dbReference type="Gene3D" id="3.40.50.620">
    <property type="entry name" value="HUPs"/>
    <property type="match status" value="1"/>
</dbReference>
<dbReference type="HAMAP" id="MF_00344">
    <property type="entry name" value="GMP_synthase"/>
    <property type="match status" value="1"/>
</dbReference>
<dbReference type="InterPro" id="IPR029062">
    <property type="entry name" value="Class_I_gatase-like"/>
</dbReference>
<dbReference type="InterPro" id="IPR017926">
    <property type="entry name" value="GATASE"/>
</dbReference>
<dbReference type="InterPro" id="IPR001674">
    <property type="entry name" value="GMP_synth_C"/>
</dbReference>
<dbReference type="InterPro" id="IPR004739">
    <property type="entry name" value="GMP_synth_GATase"/>
</dbReference>
<dbReference type="InterPro" id="IPR022955">
    <property type="entry name" value="GMP_synthase"/>
</dbReference>
<dbReference type="InterPro" id="IPR025777">
    <property type="entry name" value="GMPS_ATP_PPase_dom"/>
</dbReference>
<dbReference type="InterPro" id="IPR022310">
    <property type="entry name" value="NAD/GMP_synthase"/>
</dbReference>
<dbReference type="InterPro" id="IPR014729">
    <property type="entry name" value="Rossmann-like_a/b/a_fold"/>
</dbReference>
<dbReference type="NCBIfam" id="TIGR00884">
    <property type="entry name" value="guaA_Cterm"/>
    <property type="match status" value="1"/>
</dbReference>
<dbReference type="NCBIfam" id="TIGR00888">
    <property type="entry name" value="guaA_Nterm"/>
    <property type="match status" value="1"/>
</dbReference>
<dbReference type="NCBIfam" id="NF000848">
    <property type="entry name" value="PRK00074.1"/>
    <property type="match status" value="1"/>
</dbReference>
<dbReference type="PANTHER" id="PTHR11922:SF2">
    <property type="entry name" value="GMP SYNTHASE [GLUTAMINE-HYDROLYZING]"/>
    <property type="match status" value="1"/>
</dbReference>
<dbReference type="PANTHER" id="PTHR11922">
    <property type="entry name" value="GMP SYNTHASE-RELATED"/>
    <property type="match status" value="1"/>
</dbReference>
<dbReference type="Pfam" id="PF00117">
    <property type="entry name" value="GATase"/>
    <property type="match status" value="1"/>
</dbReference>
<dbReference type="Pfam" id="PF00958">
    <property type="entry name" value="GMP_synt_C"/>
    <property type="match status" value="1"/>
</dbReference>
<dbReference type="Pfam" id="PF02540">
    <property type="entry name" value="NAD_synthase"/>
    <property type="match status" value="1"/>
</dbReference>
<dbReference type="SUPFAM" id="SSF52402">
    <property type="entry name" value="Adenine nucleotide alpha hydrolases-like"/>
    <property type="match status" value="1"/>
</dbReference>
<dbReference type="SUPFAM" id="SSF52317">
    <property type="entry name" value="Class I glutamine amidotransferase-like"/>
    <property type="match status" value="1"/>
</dbReference>
<dbReference type="SUPFAM" id="SSF54810">
    <property type="entry name" value="GMP synthetase C-terminal dimerisation domain"/>
    <property type="match status" value="1"/>
</dbReference>
<dbReference type="PROSITE" id="PS51273">
    <property type="entry name" value="GATASE_TYPE_1"/>
    <property type="match status" value="1"/>
</dbReference>
<dbReference type="PROSITE" id="PS51553">
    <property type="entry name" value="GMPS_ATP_PPASE"/>
    <property type="match status" value="1"/>
</dbReference>
<protein>
    <recommendedName>
        <fullName evidence="1">GMP synthase [glutamine-hydrolyzing]</fullName>
        <ecNumber evidence="1">6.3.5.2</ecNumber>
    </recommendedName>
    <alternativeName>
        <fullName evidence="1">GMP synthetase</fullName>
    </alternativeName>
    <alternativeName>
        <fullName evidence="1">Glutamine amidotransferase</fullName>
    </alternativeName>
</protein>
<sequence length="539" mass="59422">MHDKILILDFGSQVTQLIARRVREAHVYCEIHPNDVSDDFVREFAPKGVILSGSHASTYEDHQLRAPQAVWDLGVPVLGICYGMQTMAVQLGGKVEWSDHREFGYAEVRAHGRTRLLDGIQDFATPEGHGMLKVWMSHGDKVGEMPPGFALMASTPSCPIAGMADEARGYYAVQFHPEVTHTVQGRKLLERFVLDIAGAKPDWIMRDHIEEAVARIREQVGDEEVILGLSGGVDSSVAAALIHRAIGDQLTCVFVDHGLLRLNEGKMVLDMFEGRLHAKVVHVDASEQFLGHLAGVADPEHKRKIIGREFVEVFQAEAKKLTNAKWLAQGTIYPDVIESGGAKTKKATTIKSHHNVGGLPETLGLKLLEPLRDLFKDEVRELGVALGLPAEMVYRHPFPGPGLGVRILGEVKRDYAELLRRADAIFIEELRGTLATEQDAAAGLCEPSQVGKSWYDLTSQAFAVFLPVKSVGVMGDGRTYDYVAALRAVQTTDFMTAHWAHLPYALLGRASNRIINEVRGINRVVYDVSGKPPATIEWE</sequence>